<proteinExistence type="inferred from homology"/>
<feature type="chain" id="PRO_0000297979" description="S-ribosylhomocysteine lyase">
    <location>
        <begin position="1"/>
        <end position="169"/>
    </location>
</feature>
<feature type="binding site" evidence="1">
    <location>
        <position position="54"/>
    </location>
    <ligand>
        <name>Fe cation</name>
        <dbReference type="ChEBI" id="CHEBI:24875"/>
    </ligand>
</feature>
<feature type="binding site" evidence="1">
    <location>
        <position position="58"/>
    </location>
    <ligand>
        <name>Fe cation</name>
        <dbReference type="ChEBI" id="CHEBI:24875"/>
    </ligand>
</feature>
<feature type="binding site" evidence="1">
    <location>
        <position position="129"/>
    </location>
    <ligand>
        <name>Fe cation</name>
        <dbReference type="ChEBI" id="CHEBI:24875"/>
    </ligand>
</feature>
<protein>
    <recommendedName>
        <fullName evidence="1">S-ribosylhomocysteine lyase</fullName>
        <ecNumber evidence="1">4.4.1.21</ecNumber>
    </recommendedName>
    <alternativeName>
        <fullName evidence="1">AI-2 synthesis protein</fullName>
    </alternativeName>
    <alternativeName>
        <fullName evidence="1">Autoinducer-2 production protein LuxS</fullName>
    </alternativeName>
</protein>
<keyword id="KW-0071">Autoinducer synthesis</keyword>
<keyword id="KW-0408">Iron</keyword>
<keyword id="KW-0456">Lyase</keyword>
<keyword id="KW-0479">Metal-binding</keyword>
<keyword id="KW-0673">Quorum sensing</keyword>
<keyword id="KW-1185">Reference proteome</keyword>
<sequence length="169" mass="18870">MPLLDSFKVDHTRMNAPAVRVAKTMTTPKGDTITVFDLRFCRPNIDILPVRGIHTMEHLFAGFMRDHLNSESVEIIDISPMGCRTGFYMSLIGAPSEADVVSAWTKSMEDALNKVPDVSKIPELNEYQCGSYKEHSLEEAHQIARDVLAKGIGVNRNEDLALDEKLLNP</sequence>
<evidence type="ECO:0000255" key="1">
    <source>
        <dbReference type="HAMAP-Rule" id="MF_00091"/>
    </source>
</evidence>
<comment type="function">
    <text evidence="1">Involved in the synthesis of autoinducer 2 (AI-2) which is secreted by bacteria and is used to communicate both the cell density and the metabolic potential of the environment. The regulation of gene expression in response to changes in cell density is called quorum sensing. Catalyzes the transformation of S-ribosylhomocysteine (RHC) to homocysteine (HC) and 4,5-dihydroxy-2,3-pentadione (DPD).</text>
</comment>
<comment type="catalytic activity">
    <reaction evidence="1">
        <text>S-(5-deoxy-D-ribos-5-yl)-L-homocysteine = (S)-4,5-dihydroxypentane-2,3-dione + L-homocysteine</text>
        <dbReference type="Rhea" id="RHEA:17753"/>
        <dbReference type="ChEBI" id="CHEBI:29484"/>
        <dbReference type="ChEBI" id="CHEBI:58195"/>
        <dbReference type="ChEBI" id="CHEBI:58199"/>
        <dbReference type="EC" id="4.4.1.21"/>
    </reaction>
</comment>
<comment type="cofactor">
    <cofactor evidence="1">
        <name>Fe cation</name>
        <dbReference type="ChEBI" id="CHEBI:24875"/>
    </cofactor>
    <text evidence="1">Binds 1 Fe cation per subunit.</text>
</comment>
<comment type="subunit">
    <text evidence="1">Homodimer.</text>
</comment>
<comment type="similarity">
    <text evidence="1">Belongs to the LuxS family.</text>
</comment>
<organism>
    <name type="scientific">Actinobacillus pleuropneumoniae serotype 5b (strain L20)</name>
    <dbReference type="NCBI Taxonomy" id="416269"/>
    <lineage>
        <taxon>Bacteria</taxon>
        <taxon>Pseudomonadati</taxon>
        <taxon>Pseudomonadota</taxon>
        <taxon>Gammaproteobacteria</taxon>
        <taxon>Pasteurellales</taxon>
        <taxon>Pasteurellaceae</taxon>
        <taxon>Actinobacillus</taxon>
    </lineage>
</organism>
<gene>
    <name evidence="1" type="primary">luxS</name>
    <name type="ordered locus">APL_1216</name>
</gene>
<reference key="1">
    <citation type="journal article" date="2008" name="J. Bacteriol.">
        <title>The complete genome sequence of Actinobacillus pleuropneumoniae L20 (serotype 5b).</title>
        <authorList>
            <person name="Foote S.J."/>
            <person name="Bosse J.T."/>
            <person name="Bouevitch A.B."/>
            <person name="Langford P.R."/>
            <person name="Young N.M."/>
            <person name="Nash J.H.E."/>
        </authorList>
    </citation>
    <scope>NUCLEOTIDE SEQUENCE [LARGE SCALE GENOMIC DNA]</scope>
    <source>
        <strain>L20</strain>
    </source>
</reference>
<accession>A3N1L8</accession>
<dbReference type="EC" id="4.4.1.21" evidence="1"/>
<dbReference type="EMBL" id="CP000569">
    <property type="protein sequence ID" value="ABN74304.1"/>
    <property type="molecule type" value="Genomic_DNA"/>
</dbReference>
<dbReference type="RefSeq" id="WP_005598178.1">
    <property type="nucleotide sequence ID" value="NC_009053.1"/>
</dbReference>
<dbReference type="SMR" id="A3N1L8"/>
<dbReference type="STRING" id="416269.APL_1216"/>
<dbReference type="EnsemblBacteria" id="ABN74304">
    <property type="protein sequence ID" value="ABN74304"/>
    <property type="gene ID" value="APL_1216"/>
</dbReference>
<dbReference type="GeneID" id="48599454"/>
<dbReference type="KEGG" id="apl:APL_1216"/>
<dbReference type="eggNOG" id="COG1854">
    <property type="taxonomic scope" value="Bacteria"/>
</dbReference>
<dbReference type="HOGENOM" id="CLU_107531_2_0_6"/>
<dbReference type="Proteomes" id="UP000001432">
    <property type="component" value="Chromosome"/>
</dbReference>
<dbReference type="GO" id="GO:0005506">
    <property type="term" value="F:iron ion binding"/>
    <property type="evidence" value="ECO:0007669"/>
    <property type="project" value="InterPro"/>
</dbReference>
<dbReference type="GO" id="GO:0043768">
    <property type="term" value="F:S-ribosylhomocysteine lyase activity"/>
    <property type="evidence" value="ECO:0007669"/>
    <property type="project" value="UniProtKB-UniRule"/>
</dbReference>
<dbReference type="GO" id="GO:0009372">
    <property type="term" value="P:quorum sensing"/>
    <property type="evidence" value="ECO:0007669"/>
    <property type="project" value="UniProtKB-UniRule"/>
</dbReference>
<dbReference type="Gene3D" id="3.30.1360.80">
    <property type="entry name" value="S-ribosylhomocysteinase (LuxS)"/>
    <property type="match status" value="1"/>
</dbReference>
<dbReference type="HAMAP" id="MF_00091">
    <property type="entry name" value="LuxS"/>
    <property type="match status" value="1"/>
</dbReference>
<dbReference type="InterPro" id="IPR037005">
    <property type="entry name" value="LuxS_sf"/>
</dbReference>
<dbReference type="InterPro" id="IPR011249">
    <property type="entry name" value="Metalloenz_LuxS/M16"/>
</dbReference>
<dbReference type="InterPro" id="IPR003815">
    <property type="entry name" value="S-ribosylhomocysteinase"/>
</dbReference>
<dbReference type="NCBIfam" id="NF002602">
    <property type="entry name" value="PRK02260.1-2"/>
    <property type="match status" value="1"/>
</dbReference>
<dbReference type="PANTHER" id="PTHR35799">
    <property type="entry name" value="S-RIBOSYLHOMOCYSTEINE LYASE"/>
    <property type="match status" value="1"/>
</dbReference>
<dbReference type="PANTHER" id="PTHR35799:SF1">
    <property type="entry name" value="S-RIBOSYLHOMOCYSTEINE LYASE"/>
    <property type="match status" value="1"/>
</dbReference>
<dbReference type="Pfam" id="PF02664">
    <property type="entry name" value="LuxS"/>
    <property type="match status" value="1"/>
</dbReference>
<dbReference type="PIRSF" id="PIRSF006160">
    <property type="entry name" value="AI2"/>
    <property type="match status" value="1"/>
</dbReference>
<dbReference type="PRINTS" id="PR01487">
    <property type="entry name" value="LUXSPROTEIN"/>
</dbReference>
<dbReference type="SUPFAM" id="SSF63411">
    <property type="entry name" value="LuxS/MPP-like metallohydrolase"/>
    <property type="match status" value="1"/>
</dbReference>
<name>LUXS_ACTP2</name>